<evidence type="ECO:0000255" key="1">
    <source>
        <dbReference type="HAMAP-Rule" id="MF_00133"/>
    </source>
</evidence>
<name>TRPB_SHESR</name>
<organism>
    <name type="scientific">Shewanella sp. (strain MR-7)</name>
    <dbReference type="NCBI Taxonomy" id="60481"/>
    <lineage>
        <taxon>Bacteria</taxon>
        <taxon>Pseudomonadati</taxon>
        <taxon>Pseudomonadota</taxon>
        <taxon>Gammaproteobacteria</taxon>
        <taxon>Alteromonadales</taxon>
        <taxon>Shewanellaceae</taxon>
        <taxon>Shewanella</taxon>
    </lineage>
</organism>
<dbReference type="EC" id="4.2.1.20" evidence="1"/>
<dbReference type="EMBL" id="CP000444">
    <property type="protein sequence ID" value="ABI42522.1"/>
    <property type="molecule type" value="Genomic_DNA"/>
</dbReference>
<dbReference type="SMR" id="Q0HWI3"/>
<dbReference type="KEGG" id="shm:Shewmr7_1524"/>
<dbReference type="HOGENOM" id="CLU_016734_3_1_6"/>
<dbReference type="UniPathway" id="UPA00035">
    <property type="reaction ID" value="UER00044"/>
</dbReference>
<dbReference type="GO" id="GO:0005737">
    <property type="term" value="C:cytoplasm"/>
    <property type="evidence" value="ECO:0007669"/>
    <property type="project" value="TreeGrafter"/>
</dbReference>
<dbReference type="GO" id="GO:0004834">
    <property type="term" value="F:tryptophan synthase activity"/>
    <property type="evidence" value="ECO:0007669"/>
    <property type="project" value="UniProtKB-UniRule"/>
</dbReference>
<dbReference type="CDD" id="cd06446">
    <property type="entry name" value="Trp-synth_B"/>
    <property type="match status" value="1"/>
</dbReference>
<dbReference type="FunFam" id="3.40.50.1100:FF:000001">
    <property type="entry name" value="Tryptophan synthase beta chain"/>
    <property type="match status" value="1"/>
</dbReference>
<dbReference type="FunFam" id="3.40.50.1100:FF:000004">
    <property type="entry name" value="Tryptophan synthase beta chain"/>
    <property type="match status" value="1"/>
</dbReference>
<dbReference type="Gene3D" id="3.40.50.1100">
    <property type="match status" value="2"/>
</dbReference>
<dbReference type="HAMAP" id="MF_00133">
    <property type="entry name" value="Trp_synth_beta"/>
    <property type="match status" value="1"/>
</dbReference>
<dbReference type="InterPro" id="IPR006653">
    <property type="entry name" value="Trp_synth_b_CS"/>
</dbReference>
<dbReference type="InterPro" id="IPR006654">
    <property type="entry name" value="Trp_synth_beta"/>
</dbReference>
<dbReference type="InterPro" id="IPR023026">
    <property type="entry name" value="Trp_synth_beta/beta-like"/>
</dbReference>
<dbReference type="InterPro" id="IPR001926">
    <property type="entry name" value="TrpB-like_PALP"/>
</dbReference>
<dbReference type="InterPro" id="IPR036052">
    <property type="entry name" value="TrpB-like_PALP_sf"/>
</dbReference>
<dbReference type="NCBIfam" id="TIGR00263">
    <property type="entry name" value="trpB"/>
    <property type="match status" value="1"/>
</dbReference>
<dbReference type="PANTHER" id="PTHR48077:SF3">
    <property type="entry name" value="TRYPTOPHAN SYNTHASE"/>
    <property type="match status" value="1"/>
</dbReference>
<dbReference type="PANTHER" id="PTHR48077">
    <property type="entry name" value="TRYPTOPHAN SYNTHASE-RELATED"/>
    <property type="match status" value="1"/>
</dbReference>
<dbReference type="Pfam" id="PF00291">
    <property type="entry name" value="PALP"/>
    <property type="match status" value="1"/>
</dbReference>
<dbReference type="PIRSF" id="PIRSF001413">
    <property type="entry name" value="Trp_syn_beta"/>
    <property type="match status" value="1"/>
</dbReference>
<dbReference type="SUPFAM" id="SSF53686">
    <property type="entry name" value="Tryptophan synthase beta subunit-like PLP-dependent enzymes"/>
    <property type="match status" value="1"/>
</dbReference>
<dbReference type="PROSITE" id="PS00168">
    <property type="entry name" value="TRP_SYNTHASE_BETA"/>
    <property type="match status" value="1"/>
</dbReference>
<proteinExistence type="inferred from homology"/>
<sequence length="396" mass="42834">MSQLKLNPYFGEYGGMYVPQILVPALKQLENAFVEAQADESFQAEFTDLLKNYAGRPTALTLTRNLSPNPMVKIYLKREDLLHGGAHKTNQVLGQALLAKRMGKKEIIAETGAGQHGVATALACALLGLKCKVYMGAKDVARQSPNVFRMRLMGAEVIPVTSGSATLKDACNEAMRDWSGSYEKAHYLLGTAAGPHPFPTIVREFQRMIGEETKKQMLEREGRLPDAVIACVGGGSNAIGMFADFIDETSVELIGVEPAGKGIDTHMHGAPLKHGKTGIFFGMKAPLMQDSEGQIEESYSISAGLDFPSVGPQHAHLNAIGRARYESATDDEALEAFQLLARSEGIIPALESAHALAYALRLARECTKETILVVNLSGRGDKDIFTVSDILNGKEE</sequence>
<keyword id="KW-0028">Amino-acid biosynthesis</keyword>
<keyword id="KW-0057">Aromatic amino acid biosynthesis</keyword>
<keyword id="KW-0456">Lyase</keyword>
<keyword id="KW-0663">Pyridoxal phosphate</keyword>
<keyword id="KW-0822">Tryptophan biosynthesis</keyword>
<accession>Q0HWI3</accession>
<gene>
    <name evidence="1" type="primary">trpB</name>
    <name type="ordered locus">Shewmr7_1524</name>
</gene>
<comment type="function">
    <text evidence="1">The beta subunit is responsible for the synthesis of L-tryptophan from indole and L-serine.</text>
</comment>
<comment type="catalytic activity">
    <reaction evidence="1">
        <text>(1S,2R)-1-C-(indol-3-yl)glycerol 3-phosphate + L-serine = D-glyceraldehyde 3-phosphate + L-tryptophan + H2O</text>
        <dbReference type="Rhea" id="RHEA:10532"/>
        <dbReference type="ChEBI" id="CHEBI:15377"/>
        <dbReference type="ChEBI" id="CHEBI:33384"/>
        <dbReference type="ChEBI" id="CHEBI:57912"/>
        <dbReference type="ChEBI" id="CHEBI:58866"/>
        <dbReference type="ChEBI" id="CHEBI:59776"/>
        <dbReference type="EC" id="4.2.1.20"/>
    </reaction>
</comment>
<comment type="cofactor">
    <cofactor evidence="1">
        <name>pyridoxal 5'-phosphate</name>
        <dbReference type="ChEBI" id="CHEBI:597326"/>
    </cofactor>
</comment>
<comment type="pathway">
    <text evidence="1">Amino-acid biosynthesis; L-tryptophan biosynthesis; L-tryptophan from chorismate: step 5/5.</text>
</comment>
<comment type="subunit">
    <text evidence="1">Tetramer of two alpha and two beta chains.</text>
</comment>
<comment type="similarity">
    <text evidence="1">Belongs to the TrpB family.</text>
</comment>
<feature type="chain" id="PRO_1000018394" description="Tryptophan synthase beta chain">
    <location>
        <begin position="1"/>
        <end position="396"/>
    </location>
</feature>
<feature type="modified residue" description="N6-(pyridoxal phosphate)lysine" evidence="1">
    <location>
        <position position="88"/>
    </location>
</feature>
<reference key="1">
    <citation type="submission" date="2006-08" db="EMBL/GenBank/DDBJ databases">
        <title>Complete sequence of chromosome 1 of Shewanella sp. MR-7.</title>
        <authorList>
            <person name="Copeland A."/>
            <person name="Lucas S."/>
            <person name="Lapidus A."/>
            <person name="Barry K."/>
            <person name="Detter J.C."/>
            <person name="Glavina del Rio T."/>
            <person name="Hammon N."/>
            <person name="Israni S."/>
            <person name="Dalin E."/>
            <person name="Tice H."/>
            <person name="Pitluck S."/>
            <person name="Kiss H."/>
            <person name="Brettin T."/>
            <person name="Bruce D."/>
            <person name="Han C."/>
            <person name="Tapia R."/>
            <person name="Gilna P."/>
            <person name="Schmutz J."/>
            <person name="Larimer F."/>
            <person name="Land M."/>
            <person name="Hauser L."/>
            <person name="Kyrpides N."/>
            <person name="Mikhailova N."/>
            <person name="Nealson K."/>
            <person name="Konstantinidis K."/>
            <person name="Klappenbach J."/>
            <person name="Tiedje J."/>
            <person name="Richardson P."/>
        </authorList>
    </citation>
    <scope>NUCLEOTIDE SEQUENCE [LARGE SCALE GENOMIC DNA]</scope>
    <source>
        <strain>MR-7</strain>
    </source>
</reference>
<protein>
    <recommendedName>
        <fullName evidence="1">Tryptophan synthase beta chain</fullName>
        <ecNumber evidence="1">4.2.1.20</ecNumber>
    </recommendedName>
</protein>